<dbReference type="EMBL" id="AF037364">
    <property type="protein sequence ID" value="AAD13810.3"/>
    <property type="molecule type" value="mRNA"/>
</dbReference>
<dbReference type="EMBL" id="AF320308">
    <property type="protein sequence ID" value="AAN05100.1"/>
    <property type="molecule type" value="mRNA"/>
</dbReference>
<dbReference type="EMBL" id="AK290980">
    <property type="protein sequence ID" value="BAF83669.1"/>
    <property type="molecule type" value="mRNA"/>
</dbReference>
<dbReference type="EMBL" id="CH471061">
    <property type="protein sequence ID" value="EAW81126.1"/>
    <property type="molecule type" value="Genomic_DNA"/>
</dbReference>
<dbReference type="EMBL" id="BC039577">
    <property type="protein sequence ID" value="AAH39577.1"/>
    <property type="molecule type" value="mRNA"/>
</dbReference>
<dbReference type="EMBL" id="AL834327">
    <property type="protein sequence ID" value="CAD38995.1"/>
    <property type="molecule type" value="mRNA"/>
</dbReference>
<dbReference type="CCDS" id="CCDS9818.1"/>
<dbReference type="RefSeq" id="NP_006020.4">
    <property type="nucleotide sequence ID" value="NM_006029.5"/>
</dbReference>
<dbReference type="SMR" id="Q8ND90"/>
<dbReference type="BioGRID" id="114667">
    <property type="interactions" value="188"/>
</dbReference>
<dbReference type="FunCoup" id="Q8ND90">
    <property type="interactions" value="1262"/>
</dbReference>
<dbReference type="IntAct" id="Q8ND90">
    <property type="interactions" value="194"/>
</dbReference>
<dbReference type="MINT" id="Q8ND90"/>
<dbReference type="STRING" id="9606.ENSP00000318914"/>
<dbReference type="GlyGen" id="Q8ND90">
    <property type="glycosylation" value="1 site"/>
</dbReference>
<dbReference type="iPTMnet" id="Q8ND90"/>
<dbReference type="PhosphoSitePlus" id="Q8ND90"/>
<dbReference type="BioMuta" id="PNMA1"/>
<dbReference type="DMDM" id="37999715"/>
<dbReference type="jPOST" id="Q8ND90"/>
<dbReference type="MassIVE" id="Q8ND90"/>
<dbReference type="PaxDb" id="9606-ENSP00000318914"/>
<dbReference type="PeptideAtlas" id="Q8ND90"/>
<dbReference type="ProteomicsDB" id="72992"/>
<dbReference type="Pumba" id="Q8ND90"/>
<dbReference type="Antibodypedia" id="26">
    <property type="antibodies" value="194 antibodies from 26 providers"/>
</dbReference>
<dbReference type="DNASU" id="9240"/>
<dbReference type="Ensembl" id="ENST00000316836.5">
    <property type="protein sequence ID" value="ENSP00000318914.3"/>
    <property type="gene ID" value="ENSG00000176903.5"/>
</dbReference>
<dbReference type="GeneID" id="9240"/>
<dbReference type="KEGG" id="hsa:9240"/>
<dbReference type="MANE-Select" id="ENST00000316836.5">
    <property type="protein sequence ID" value="ENSP00000318914.3"/>
    <property type="RefSeq nucleotide sequence ID" value="NM_006029.5"/>
    <property type="RefSeq protein sequence ID" value="NP_006020.4"/>
</dbReference>
<dbReference type="UCSC" id="uc001xor.2">
    <property type="organism name" value="human"/>
</dbReference>
<dbReference type="AGR" id="HGNC:9158"/>
<dbReference type="CTD" id="9240"/>
<dbReference type="DisGeNET" id="9240"/>
<dbReference type="GeneCards" id="PNMA1"/>
<dbReference type="HGNC" id="HGNC:9158">
    <property type="gene designation" value="PNMA1"/>
</dbReference>
<dbReference type="HPA" id="ENSG00000176903">
    <property type="expression patterns" value="Low tissue specificity"/>
</dbReference>
<dbReference type="MIM" id="604010">
    <property type="type" value="gene"/>
</dbReference>
<dbReference type="neXtProt" id="NX_Q8ND90"/>
<dbReference type="OpenTargets" id="ENSG00000176903"/>
<dbReference type="PharmGKB" id="PA33481"/>
<dbReference type="VEuPathDB" id="HostDB:ENSG00000176903"/>
<dbReference type="eggNOG" id="ENOG502SPHT">
    <property type="taxonomic scope" value="Eukaryota"/>
</dbReference>
<dbReference type="GeneTree" id="ENSGT01030000234522"/>
<dbReference type="HOGENOM" id="CLU_014694_0_0_1"/>
<dbReference type="InParanoid" id="Q8ND90"/>
<dbReference type="OMA" id="EHTNEVM"/>
<dbReference type="OrthoDB" id="115435at2759"/>
<dbReference type="PAN-GO" id="Q8ND90">
    <property type="GO annotations" value="0 GO annotations based on evolutionary models"/>
</dbReference>
<dbReference type="PhylomeDB" id="Q8ND90"/>
<dbReference type="TreeFam" id="TF335054"/>
<dbReference type="PathwayCommons" id="Q8ND90"/>
<dbReference type="SignaLink" id="Q8ND90"/>
<dbReference type="BioGRID-ORCS" id="9240">
    <property type="hits" value="18 hits in 1148 CRISPR screens"/>
</dbReference>
<dbReference type="CD-CODE" id="91857CE7">
    <property type="entry name" value="Nucleolus"/>
</dbReference>
<dbReference type="ChiTaRS" id="PNMA1">
    <property type="organism name" value="human"/>
</dbReference>
<dbReference type="GenomeRNAi" id="9240"/>
<dbReference type="Pharos" id="Q8ND90">
    <property type="development level" value="Tbio"/>
</dbReference>
<dbReference type="PRO" id="PR:Q8ND90"/>
<dbReference type="Proteomes" id="UP000005640">
    <property type="component" value="Chromosome 14"/>
</dbReference>
<dbReference type="RNAct" id="Q8ND90">
    <property type="molecule type" value="protein"/>
</dbReference>
<dbReference type="Bgee" id="ENSG00000176903">
    <property type="expression patterns" value="Expressed in cortical plate and 100 other cell types or tissues"/>
</dbReference>
<dbReference type="GO" id="GO:0005737">
    <property type="term" value="C:cytoplasm"/>
    <property type="evidence" value="ECO:0000314"/>
    <property type="project" value="UniProtKB"/>
</dbReference>
<dbReference type="GO" id="GO:0005730">
    <property type="term" value="C:nucleolus"/>
    <property type="evidence" value="ECO:0000314"/>
    <property type="project" value="UniProtKB"/>
</dbReference>
<dbReference type="GO" id="GO:0002437">
    <property type="term" value="P:inflammatory response to antigenic stimulus"/>
    <property type="evidence" value="ECO:0000250"/>
    <property type="project" value="UniProtKB"/>
</dbReference>
<dbReference type="GO" id="GO:0043065">
    <property type="term" value="P:positive regulation of apoptotic process"/>
    <property type="evidence" value="ECO:0000250"/>
    <property type="project" value="UniProtKB"/>
</dbReference>
<dbReference type="InterPro" id="IPR026523">
    <property type="entry name" value="PNMA"/>
</dbReference>
<dbReference type="InterPro" id="IPR048270">
    <property type="entry name" value="PNMA_C"/>
</dbReference>
<dbReference type="InterPro" id="IPR048271">
    <property type="entry name" value="PNMA_N"/>
</dbReference>
<dbReference type="PANTHER" id="PTHR23095">
    <property type="entry name" value="PARANEOPLASTIC ANTIGEN"/>
    <property type="match status" value="1"/>
</dbReference>
<dbReference type="PANTHER" id="PTHR23095:SF17">
    <property type="entry name" value="PARANEOPLASTIC ANTIGEN MA1"/>
    <property type="match status" value="1"/>
</dbReference>
<dbReference type="Pfam" id="PF14893">
    <property type="entry name" value="PNMA"/>
    <property type="match status" value="1"/>
</dbReference>
<dbReference type="Pfam" id="PF20846">
    <property type="entry name" value="PNMA_N"/>
    <property type="match status" value="1"/>
</dbReference>
<protein>
    <recommendedName>
        <fullName>Paraneoplastic antigen Ma1</fullName>
    </recommendedName>
    <alternativeName>
        <fullName>37 kDa neuronal protein</fullName>
    </alternativeName>
    <alternativeName>
        <fullName>Neuron- and testis-specific protein 1</fullName>
    </alternativeName>
</protein>
<keyword id="KW-0539">Nucleus</keyword>
<keyword id="KW-1267">Proteomics identification</keyword>
<keyword id="KW-1185">Reference proteome</keyword>
<keyword id="KW-0825">Tumor antigen</keyword>
<comment type="interaction">
    <interactant intactId="EBI-302345">
        <id>Q8ND90</id>
    </interactant>
    <interactant intactId="EBI-8643161">
        <id>Q9NX04</id>
        <label>AIRIM</label>
    </interactant>
    <organismsDiffer>false</organismsDiffer>
    <experiments>3</experiments>
</comment>
<comment type="interaction">
    <interactant intactId="EBI-302345">
        <id>Q8ND90</id>
    </interactant>
    <interactant intactId="EBI-744859">
        <id>Q96IX9</id>
        <label>ANKRD36BP1</label>
    </interactant>
    <organismsDiffer>false</organismsDiffer>
    <experiments>3</experiments>
</comment>
<comment type="interaction">
    <interactant intactId="EBI-302345">
        <id>Q8ND90</id>
    </interactant>
    <interactant intactId="EBI-847814">
        <id>Q7Z2E3</id>
        <label>APTX</label>
    </interactant>
    <organismsDiffer>false</organismsDiffer>
    <experiments>3</experiments>
</comment>
<comment type="interaction">
    <interactant intactId="EBI-302345">
        <id>Q8ND90</id>
    </interactant>
    <interactant intactId="EBI-12298187">
        <id>Q7Z2E3-7</id>
        <label>APTX</label>
    </interactant>
    <organismsDiffer>false</organismsDiffer>
    <experiments>3</experiments>
</comment>
<comment type="interaction">
    <interactant intactId="EBI-302345">
        <id>Q8ND90</id>
    </interactant>
    <interactant intactId="EBI-1642523">
        <id>Q15052</id>
        <label>ARHGEF6</label>
    </interactant>
    <organismsDiffer>false</organismsDiffer>
    <experiments>3</experiments>
</comment>
<comment type="interaction">
    <interactant intactId="EBI-302345">
        <id>Q8ND90</id>
    </interactant>
    <interactant intactId="EBI-948603">
        <id>Q03989</id>
        <label>ARID5A</label>
    </interactant>
    <organismsDiffer>false</organismsDiffer>
    <experiments>5</experiments>
</comment>
<comment type="interaction">
    <interactant intactId="EBI-302345">
        <id>Q8ND90</id>
    </interactant>
    <interactant intactId="EBI-743231">
        <id>O95671</id>
        <label>ASMTL</label>
    </interactant>
    <organismsDiffer>false</organismsDiffer>
    <experiments>3</experiments>
</comment>
<comment type="interaction">
    <interactant intactId="EBI-302345">
        <id>Q8ND90</id>
    </interactant>
    <interactant intactId="EBI-355815">
        <id>P48047</id>
        <label>ATP5PO</label>
    </interactant>
    <organismsDiffer>false</organismsDiffer>
    <experiments>4</experiments>
</comment>
<comment type="interaction">
    <interactant intactId="EBI-302345">
        <id>Q8ND90</id>
    </interactant>
    <interactant intactId="EBI-711802">
        <id>O75348</id>
        <label>ATP6V1G1</label>
    </interactant>
    <organismsDiffer>false</organismsDiffer>
    <experiments>3</experiments>
</comment>
<comment type="interaction">
    <interactant intactId="EBI-302345">
        <id>Q8ND90</id>
    </interactant>
    <interactant intactId="EBI-745073">
        <id>Q9BXY8</id>
        <label>BEX2</label>
    </interactant>
    <organismsDiffer>false</organismsDiffer>
    <experiments>3</experiments>
</comment>
<comment type="interaction">
    <interactant intactId="EBI-302345">
        <id>Q8ND90</id>
    </interactant>
    <interactant intactId="EBI-358049">
        <id>Q13895</id>
        <label>BYSL</label>
    </interactant>
    <organismsDiffer>false</organismsDiffer>
    <experiments>3</experiments>
</comment>
<comment type="interaction">
    <interactant intactId="EBI-302345">
        <id>Q8ND90</id>
    </interactant>
    <interactant intactId="EBI-10226774">
        <id>Q0VAL7</id>
        <label>C21orf58</label>
    </interactant>
    <organismsDiffer>false</organismsDiffer>
    <experiments>3</experiments>
</comment>
<comment type="interaction">
    <interactant intactId="EBI-302345">
        <id>Q8ND90</id>
    </interactant>
    <interactant intactId="EBI-715389">
        <id>Q9H7E9</id>
        <label>C8orf33</label>
    </interactant>
    <organismsDiffer>false</organismsDiffer>
    <experiments>3</experiments>
</comment>
<comment type="interaction">
    <interactant intactId="EBI-302345">
        <id>Q8ND90</id>
    </interactant>
    <interactant intactId="EBI-718719">
        <id>Q9Y2V2</id>
        <label>CARHSP1</label>
    </interactant>
    <organismsDiffer>false</organismsDiffer>
    <experiments>3</experiments>
</comment>
<comment type="interaction">
    <interactant intactId="EBI-302345">
        <id>Q8ND90</id>
    </interactant>
    <interactant intactId="EBI-712912">
        <id>Q9HC52</id>
        <label>CBX8</label>
    </interactant>
    <organismsDiffer>false</organismsDiffer>
    <experiments>3</experiments>
</comment>
<comment type="interaction">
    <interactant intactId="EBI-302345">
        <id>Q8ND90</id>
    </interactant>
    <interactant intactId="EBI-10247802">
        <id>Q8IYE0-2</id>
        <label>CCDC146</label>
    </interactant>
    <organismsDiffer>false</organismsDiffer>
    <experiments>3</experiments>
</comment>
<comment type="interaction">
    <interactant intactId="EBI-302345">
        <id>Q8ND90</id>
    </interactant>
    <interactant intactId="EBI-11748295">
        <id>E9PSE9</id>
        <label>CCDC198</label>
    </interactant>
    <organismsDiffer>false</organismsDiffer>
    <experiments>3</experiments>
</comment>
<comment type="interaction">
    <interactant intactId="EBI-302345">
        <id>Q8ND90</id>
    </interactant>
    <interactant intactId="EBI-10238351">
        <id>Q9NVL8</id>
        <label>CCDC198</label>
    </interactant>
    <organismsDiffer>false</organismsDiffer>
    <experiments>3</experiments>
</comment>
<comment type="interaction">
    <interactant intactId="EBI-302345">
        <id>Q8ND90</id>
    </interactant>
    <interactant intactId="EBI-3905829">
        <id>P51959</id>
        <label>CCNG1</label>
    </interactant>
    <organismsDiffer>false</organismsDiffer>
    <experiments>3</experiments>
</comment>
<comment type="interaction">
    <interactant intactId="EBI-302345">
        <id>Q8ND90</id>
    </interactant>
    <interactant intactId="EBI-746238">
        <id>Q07002</id>
        <label>CDK18</label>
    </interactant>
    <organismsDiffer>false</organismsDiffer>
    <experiments>3</experiments>
</comment>
<comment type="interaction">
    <interactant intactId="EBI-302345">
        <id>Q8ND90</id>
    </interactant>
    <interactant intactId="EBI-742422">
        <id>Q96M91</id>
        <label>CFAP53</label>
    </interactant>
    <organismsDiffer>false</organismsDiffer>
    <experiments>3</experiments>
</comment>
<comment type="interaction">
    <interactant intactId="EBI-302345">
        <id>Q8ND90</id>
    </interactant>
    <interactant intactId="EBI-741528">
        <id>Q9UKJ5</id>
        <label>CHIC2</label>
    </interactant>
    <organismsDiffer>false</organismsDiffer>
    <experiments>3</experiments>
</comment>
<comment type="interaction">
    <interactant intactId="EBI-302345">
        <id>Q8ND90</id>
    </interactant>
    <interactant intactId="EBI-741032">
        <id>Q8NE01</id>
        <label>CNNM3</label>
    </interactant>
    <organismsDiffer>false</organismsDiffer>
    <experiments>3</experiments>
</comment>
<comment type="interaction">
    <interactant intactId="EBI-302345">
        <id>Q8ND90</id>
    </interactant>
    <interactant intactId="EBI-10269984">
        <id>Q8NE01-3</id>
        <label>CNNM3</label>
    </interactant>
    <organismsDiffer>false</organismsDiffer>
    <experiments>3</experiments>
</comment>
<comment type="interaction">
    <interactant intactId="EBI-302345">
        <id>Q8ND90</id>
    </interactant>
    <interactant intactId="EBI-1053725">
        <id>P10606</id>
        <label>COX5B</label>
    </interactant>
    <organismsDiffer>false</organismsDiffer>
    <experiments>3</experiments>
</comment>
<comment type="interaction">
    <interactant intactId="EBI-302345">
        <id>Q8ND90</id>
    </interactant>
    <interactant intactId="EBI-751587">
        <id>Q9GZU7</id>
        <label>CTDSP1</label>
    </interactant>
    <organismsDiffer>false</organismsDiffer>
    <experiments>2</experiments>
</comment>
<comment type="interaction">
    <interactant intactId="EBI-302345">
        <id>Q8ND90</id>
    </interactant>
    <interactant intactId="EBI-11962928">
        <id>Q9UI47-2</id>
        <label>CTNNA3</label>
    </interactant>
    <organismsDiffer>false</organismsDiffer>
    <experiments>3</experiments>
</comment>
<comment type="interaction">
    <interactant intactId="EBI-302345">
        <id>Q8ND90</id>
    </interactant>
    <interactant intactId="EBI-77321">
        <id>Q9UER7</id>
        <label>DAXX</label>
    </interactant>
    <organismsDiffer>false</organismsDiffer>
    <experiments>5</experiments>
</comment>
<comment type="interaction">
    <interactant intactId="EBI-302345">
        <id>Q8ND90</id>
    </interactant>
    <interactant intactId="EBI-2134033">
        <id>Q9UJW0</id>
        <label>DCTN4</label>
    </interactant>
    <organismsDiffer>false</organismsDiffer>
    <experiments>3</experiments>
</comment>
<comment type="interaction">
    <interactant intactId="EBI-302345">
        <id>Q8ND90</id>
    </interactant>
    <interactant intactId="EBI-2339219">
        <id>Q08426</id>
        <label>EHHADH</label>
    </interactant>
    <organismsDiffer>false</organismsDiffer>
    <experiments>3</experiments>
</comment>
<comment type="interaction">
    <interactant intactId="EBI-302345">
        <id>Q8ND90</id>
    </interactant>
    <interactant intactId="EBI-744099">
        <id>Q9H0I2</id>
        <label>ENKD1</label>
    </interactant>
    <organismsDiffer>false</organismsDiffer>
    <experiments>4</experiments>
</comment>
<comment type="interaction">
    <interactant intactId="EBI-302345">
        <id>Q8ND90</id>
    </interactant>
    <interactant intactId="EBI-10192902">
        <id>O95990-3</id>
        <label>FAM107A</label>
    </interactant>
    <organismsDiffer>false</organismsDiffer>
    <experiments>3</experiments>
</comment>
<comment type="interaction">
    <interactant intactId="EBI-302345">
        <id>Q8ND90</id>
    </interactant>
    <interactant intactId="EBI-1752811">
        <id>Q9BQ89</id>
        <label>FAM110A</label>
    </interactant>
    <organismsDiffer>false</organismsDiffer>
    <experiments>3</experiments>
</comment>
<comment type="interaction">
    <interactant intactId="EBI-302345">
        <id>Q8ND90</id>
    </interactant>
    <interactant intactId="EBI-719941">
        <id>Q3B820</id>
        <label>FAM161A</label>
    </interactant>
    <organismsDiffer>false</organismsDiffer>
    <experiments>3</experiments>
</comment>
<comment type="interaction">
    <interactant intactId="EBI-302345">
        <id>Q8ND90</id>
    </interactant>
    <interactant intactId="EBI-7225287">
        <id>Q96MY7</id>
        <label>FAM161B</label>
    </interactant>
    <organismsDiffer>false</organismsDiffer>
    <experiments>3</experiments>
</comment>
<comment type="interaction">
    <interactant intactId="EBI-302345">
        <id>Q8ND90</id>
    </interactant>
    <interactant intactId="EBI-10244131">
        <id>Q8TES7-6</id>
        <label>FBF1</label>
    </interactant>
    <organismsDiffer>false</organismsDiffer>
    <experiments>3</experiments>
</comment>
<comment type="interaction">
    <interactant intactId="EBI-302345">
        <id>Q8ND90</id>
    </interactant>
    <interactant intactId="EBI-744419">
        <id>Q96D16</id>
        <label>FBXL18</label>
    </interactant>
    <organismsDiffer>false</organismsDiffer>
    <experiments>5</experiments>
</comment>
<comment type="interaction">
    <interactant intactId="EBI-302345">
        <id>Q8ND90</id>
    </interactant>
    <interactant intactId="EBI-2515330">
        <id>Q96JP0</id>
        <label>FEM1C</label>
    </interactant>
    <organismsDiffer>false</organismsDiffer>
    <experiments>3</experiments>
</comment>
<comment type="interaction">
    <interactant intactId="EBI-302345">
        <id>Q8ND90</id>
    </interactant>
    <interactant intactId="EBI-11320806">
        <id>Q9NU39</id>
        <label>FOXD4L1</label>
    </interactant>
    <organismsDiffer>false</organismsDiffer>
    <experiments>3</experiments>
</comment>
<comment type="interaction">
    <interactant intactId="EBI-302345">
        <id>Q8ND90</id>
    </interactant>
    <interactant intactId="EBI-11961494">
        <id>Q6VB84</id>
        <label>FOXD4L3</label>
    </interactant>
    <organismsDiffer>false</organismsDiffer>
    <experiments>3</experiments>
</comment>
<comment type="interaction">
    <interactant intactId="EBI-302345">
        <id>Q8ND90</id>
    </interactant>
    <interactant intactId="EBI-372506">
        <id>Q8TAE8</id>
        <label>GADD45GIP1</label>
    </interactant>
    <organismsDiffer>false</organismsDiffer>
    <experiments>3</experiments>
</comment>
<comment type="interaction">
    <interactant intactId="EBI-302345">
        <id>Q8ND90</id>
    </interactant>
    <interactant intactId="EBI-744104">
        <id>P55040</id>
        <label>GEM</label>
    </interactant>
    <organismsDiffer>false</organismsDiffer>
    <experiments>3</experiments>
</comment>
<comment type="interaction">
    <interactant intactId="EBI-302345">
        <id>Q8ND90</id>
    </interactant>
    <interactant intactId="EBI-751540">
        <id>O95872</id>
        <label>GPANK1</label>
    </interactant>
    <organismsDiffer>false</organismsDiffer>
    <experiments>4</experiments>
</comment>
<comment type="interaction">
    <interactant intactId="EBI-302345">
        <id>Q8ND90</id>
    </interactant>
    <interactant intactId="EBI-10178951">
        <id>O00155</id>
        <label>GPR25</label>
    </interactant>
    <organismsDiffer>false</organismsDiffer>
    <experiments>3</experiments>
</comment>
<comment type="interaction">
    <interactant intactId="EBI-302345">
        <id>Q8ND90</id>
    </interactant>
    <interactant intactId="EBI-5453796">
        <id>A4D1E9</id>
        <label>GTPBP10</label>
    </interactant>
    <organismsDiffer>false</organismsDiffer>
    <experiments>4</experiments>
</comment>
<comment type="interaction">
    <interactant intactId="EBI-302345">
        <id>Q8ND90</id>
    </interactant>
    <interactant intactId="EBI-11956675">
        <id>Q9GZV7</id>
        <label>HAPLN2</label>
    </interactant>
    <organismsDiffer>false</organismsDiffer>
    <experiments>3</experiments>
</comment>
<comment type="interaction">
    <interactant intactId="EBI-302345">
        <id>Q8ND90</id>
    </interactant>
    <interactant intactId="EBI-9834454">
        <id>P08631-2</id>
        <label>HCK</label>
    </interactant>
    <organismsDiffer>false</organismsDiffer>
    <experiments>3</experiments>
</comment>
<comment type="interaction">
    <interactant intactId="EBI-302345">
        <id>Q8ND90</id>
    </interactant>
    <interactant intactId="EBI-308629">
        <id>P56524</id>
        <label>HDAC4</label>
    </interactant>
    <organismsDiffer>false</organismsDiffer>
    <experiments>3</experiments>
</comment>
<comment type="interaction">
    <interactant intactId="EBI-302345">
        <id>Q8ND90</id>
    </interactant>
    <interactant intactId="EBI-16429135">
        <id>A0A0S2Z4Q4</id>
        <label>HGS</label>
    </interactant>
    <organismsDiffer>false</organismsDiffer>
    <experiments>3</experiments>
</comment>
<comment type="interaction">
    <interactant intactId="EBI-302345">
        <id>Q8ND90</id>
    </interactant>
    <interactant intactId="EBI-745290">
        <id>P17482</id>
        <label>HOXB9</label>
    </interactant>
    <organismsDiffer>false</organismsDiffer>
    <experiments>6</experiments>
</comment>
<comment type="interaction">
    <interactant intactId="EBI-302345">
        <id>Q8ND90</id>
    </interactant>
    <interactant intactId="EBI-11955401">
        <id>Q86VF2-5</id>
        <label>IGFN1</label>
    </interactant>
    <organismsDiffer>false</organismsDiffer>
    <experiments>3</experiments>
</comment>
<comment type="interaction">
    <interactant intactId="EBI-302345">
        <id>Q8ND90</id>
    </interactant>
    <interactant intactId="EBI-715611">
        <id>Q9C086</id>
        <label>INO80B</label>
    </interactant>
    <organismsDiffer>false</organismsDiffer>
    <experiments>3</experiments>
</comment>
<comment type="interaction">
    <interactant intactId="EBI-302345">
        <id>Q8ND90</id>
    </interactant>
    <interactant intactId="EBI-740244">
        <id>Q7Z3B3</id>
        <label>KANSL1</label>
    </interactant>
    <organismsDiffer>false</organismsDiffer>
    <experiments>3</experiments>
</comment>
<comment type="interaction">
    <interactant intactId="EBI-302345">
        <id>Q8ND90</id>
    </interactant>
    <interactant intactId="EBI-1052105">
        <id>Q14657</id>
        <label>LAGE3</label>
    </interactant>
    <organismsDiffer>false</organismsDiffer>
    <experiments>3</experiments>
</comment>
<comment type="interaction">
    <interactant intactId="EBI-302345">
        <id>Q8ND90</id>
    </interactant>
    <interactant intactId="EBI-748884">
        <id>Q96GY3</id>
        <label>LIN37</label>
    </interactant>
    <organismsDiffer>false</organismsDiffer>
    <experiments>3</experiments>
</comment>
<comment type="interaction">
    <interactant intactId="EBI-302345">
        <id>Q8ND90</id>
    </interactant>
    <interactant intactId="EBI-11742507">
        <id>Q8TAP4-4</id>
        <label>LMO3</label>
    </interactant>
    <organismsDiffer>false</organismsDiffer>
    <experiments>5</experiments>
</comment>
<comment type="interaction">
    <interactant intactId="EBI-302345">
        <id>Q8ND90</id>
    </interactant>
    <interactant intactId="EBI-739832">
        <id>Q8TBB1</id>
        <label>LNX1</label>
    </interactant>
    <organismsDiffer>false</organismsDiffer>
    <experiments>7</experiments>
</comment>
<comment type="interaction">
    <interactant intactId="EBI-302345">
        <id>Q8ND90</id>
    </interactant>
    <interactant intactId="EBI-6659161">
        <id>Q9Y586</id>
        <label>MAB21L2</label>
    </interactant>
    <organismsDiffer>false</organismsDiffer>
    <experiments>3</experiments>
</comment>
<comment type="interaction">
    <interactant intactId="EBI-302345">
        <id>Q8ND90</id>
    </interactant>
    <interactant intactId="EBI-2350695">
        <id>Q96GV9</id>
        <label>MACIR</label>
    </interactant>
    <organismsDiffer>false</organismsDiffer>
    <experiments>3</experiments>
</comment>
<comment type="interaction">
    <interactant intactId="EBI-302345">
        <id>Q8ND90</id>
    </interactant>
    <interactant intactId="EBI-302319">
        <id>Q96L34</id>
        <label>MARK4</label>
    </interactant>
    <organismsDiffer>false</organismsDiffer>
    <experiments>2</experiments>
</comment>
<comment type="interaction">
    <interactant intactId="EBI-302345">
        <id>Q8ND90</id>
    </interactant>
    <interactant intactId="EBI-355924">
        <id>P33993</id>
        <label>MCM7</label>
    </interactant>
    <organismsDiffer>false</organismsDiffer>
    <experiments>3</experiments>
</comment>
<comment type="interaction">
    <interactant intactId="EBI-302345">
        <id>Q8ND90</id>
    </interactant>
    <interactant intactId="EBI-10286267">
        <id>Q96G25-2</id>
        <label>MED8</label>
    </interactant>
    <organismsDiffer>false</organismsDiffer>
    <experiments>3</experiments>
</comment>
<comment type="interaction">
    <interactant intactId="EBI-302345">
        <id>Q8ND90</id>
    </interactant>
    <interactant intactId="EBI-749353">
        <id>Q9H7H0</id>
        <label>METTL17</label>
    </interactant>
    <organismsDiffer>false</organismsDiffer>
    <experiments>7</experiments>
</comment>
<comment type="interaction">
    <interactant intactId="EBI-302345">
        <id>Q8ND90</id>
    </interactant>
    <interactant intactId="EBI-11098807">
        <id>Q9H7H0-2</id>
        <label>METTL17</label>
    </interactant>
    <organismsDiffer>false</organismsDiffer>
    <experiments>6</experiments>
</comment>
<comment type="interaction">
    <interactant intactId="EBI-302345">
        <id>Q8ND90</id>
    </interactant>
    <interactant intactId="EBI-14086479">
        <id>Q8IVT4</id>
        <label>MGC50722</label>
    </interactant>
    <organismsDiffer>false</organismsDiffer>
    <experiments>3</experiments>
</comment>
<comment type="interaction">
    <interactant intactId="EBI-302345">
        <id>Q8ND90</id>
    </interactant>
    <interactant intactId="EBI-723524">
        <id>Q7Z7H8</id>
        <label>MRPL10</label>
    </interactant>
    <organismsDiffer>false</organismsDiffer>
    <experiments>3</experiments>
</comment>
<comment type="interaction">
    <interactant intactId="EBI-302345">
        <id>Q8ND90</id>
    </interactant>
    <interactant intactId="EBI-5453723">
        <id>Q9Y3B7</id>
        <label>MRPL11</label>
    </interactant>
    <organismsDiffer>false</organismsDiffer>
    <experiments>6</experiments>
</comment>
<comment type="interaction">
    <interactant intactId="EBI-302345">
        <id>Q8ND90</id>
    </interactant>
    <interactant intactId="EBI-1046141">
        <id>Q16540</id>
        <label>MRPL23</label>
    </interactant>
    <organismsDiffer>false</organismsDiffer>
    <experiments>3</experiments>
</comment>
<comment type="interaction">
    <interactant intactId="EBI-302345">
        <id>Q8ND90</id>
    </interactant>
    <interactant intactId="EBI-7950783">
        <id>Q96JP2</id>
        <label>MYO15B</label>
    </interactant>
    <organismsDiffer>false</organismsDiffer>
    <experiments>3</experiments>
</comment>
<comment type="interaction">
    <interactant intactId="EBI-302345">
        <id>Q8ND90</id>
    </interactant>
    <interactant intactId="EBI-744402">
        <id>Q9NP98</id>
        <label>MYOZ1</label>
    </interactant>
    <organismsDiffer>false</organismsDiffer>
    <experiments>3</experiments>
</comment>
<comment type="interaction">
    <interactant intactId="EBI-302345">
        <id>Q8ND90</id>
    </interactant>
    <interactant intactId="EBI-10210114">
        <id>P48146</id>
        <label>NPBWR2</label>
    </interactant>
    <organismsDiffer>false</organismsDiffer>
    <experiments>3</experiments>
</comment>
<comment type="interaction">
    <interactant intactId="EBI-302345">
        <id>Q8ND90</id>
    </interactant>
    <interactant intactId="EBI-12028784">
        <id>Q6X4W1-2</id>
        <label>NSMF</label>
    </interactant>
    <organismsDiffer>false</organismsDiffer>
    <experiments>3</experiments>
</comment>
<comment type="interaction">
    <interactant intactId="EBI-302345">
        <id>Q8ND90</id>
    </interactant>
    <interactant intactId="EBI-741158">
        <id>Q96HA8</id>
        <label>NTAQ1</label>
    </interactant>
    <organismsDiffer>false</organismsDiffer>
    <experiments>6</experiments>
</comment>
<comment type="interaction">
    <interactant intactId="EBI-302345">
        <id>Q8ND90</id>
    </interactant>
    <interactant intactId="EBI-2949792">
        <id>Q9BRJ7</id>
        <label>NUDT16L1</label>
    </interactant>
    <organismsDiffer>false</organismsDiffer>
    <experiments>3</experiments>
</comment>
<comment type="interaction">
    <interactant intactId="EBI-302345">
        <id>Q8ND90</id>
    </interactant>
    <interactant intactId="EBI-81968">
        <id>Q8TEW0</id>
        <label>PARD3</label>
    </interactant>
    <organismsDiffer>false</organismsDiffer>
    <experiments>4</experiments>
</comment>
<comment type="interaction">
    <interactant intactId="EBI-302345">
        <id>Q8ND90</id>
    </interactant>
    <interactant intactId="EBI-81876">
        <id>Q9NPB6</id>
        <label>PARD6A</label>
    </interactant>
    <organismsDiffer>false</organismsDiffer>
    <experiments>2</experiments>
</comment>
<comment type="interaction">
    <interactant intactId="EBI-302345">
        <id>Q8ND90</id>
    </interactant>
    <interactant intactId="EBI-295391">
        <id>Q9BYG5</id>
        <label>PARD6B</label>
    </interactant>
    <organismsDiffer>false</organismsDiffer>
    <experiments>2</experiments>
</comment>
<comment type="interaction">
    <interactant intactId="EBI-302345">
        <id>Q8ND90</id>
    </interactant>
    <interactant intactId="EBI-10178671">
        <id>J3QSH9</id>
        <label>PER1</label>
    </interactant>
    <organismsDiffer>false</organismsDiffer>
    <experiments>3</experiments>
</comment>
<comment type="interaction">
    <interactant intactId="EBI-302345">
        <id>Q8ND90</id>
    </interactant>
    <interactant intactId="EBI-714158">
        <id>Q13526</id>
        <label>PIN1</label>
    </interactant>
    <organismsDiffer>false</organismsDiffer>
    <experiments>3</experiments>
</comment>
<comment type="interaction">
    <interactant intactId="EBI-302345">
        <id>Q8ND90</id>
    </interactant>
    <interactant intactId="EBI-714599">
        <id>Q9Y237</id>
        <label>PIN4</label>
    </interactant>
    <organismsDiffer>false</organismsDiffer>
    <experiments>3</experiments>
</comment>
<comment type="interaction">
    <interactant intactId="EBI-302345">
        <id>Q8ND90</id>
    </interactant>
    <interactant intactId="EBI-602382">
        <id>Q16512</id>
        <label>PKN1</label>
    </interactant>
    <organismsDiffer>false</organismsDiffer>
    <experiments>3</experiments>
</comment>
<comment type="interaction">
    <interactant intactId="EBI-302345">
        <id>Q8ND90</id>
    </interactant>
    <interactant intactId="EBI-1384335">
        <id>Q6P5Z2</id>
        <label>PKN3</label>
    </interactant>
    <organismsDiffer>false</organismsDiffer>
    <experiments>3</experiments>
</comment>
<comment type="interaction">
    <interactant intactId="EBI-302345">
        <id>Q8ND90</id>
    </interactant>
    <interactant intactId="EBI-10171633">
        <id>Q96PV4</id>
        <label>PNMA5</label>
    </interactant>
    <organismsDiffer>false</organismsDiffer>
    <experiments>6</experiments>
</comment>
<comment type="interaction">
    <interactant intactId="EBI-302345">
        <id>Q8ND90</id>
    </interactant>
    <interactant intactId="EBI-721270">
        <id>P0CW24</id>
        <label>PNMA6A</label>
    </interactant>
    <organismsDiffer>false</organismsDiffer>
    <experiments>10</experiments>
</comment>
<comment type="interaction">
    <interactant intactId="EBI-302345">
        <id>Q8ND90</id>
    </interactant>
    <interactant intactId="EBI-10276663">
        <id>Q8WUT1</id>
        <label>POLDIP3</label>
    </interactant>
    <organismsDiffer>false</organismsDiffer>
    <experiments>3</experiments>
</comment>
<comment type="interaction">
    <interactant intactId="EBI-302345">
        <id>Q8ND90</id>
    </interactant>
    <interactant intactId="EBI-10320765">
        <id>Q9UGP5-2</id>
        <label>POLL</label>
    </interactant>
    <organismsDiffer>false</organismsDiffer>
    <experiments>3</experiments>
</comment>
<comment type="interaction">
    <interactant intactId="EBI-302345">
        <id>Q8ND90</id>
    </interactant>
    <interactant intactId="EBI-10253863">
        <id>Q6PIY2</id>
        <label>POLM</label>
    </interactant>
    <organismsDiffer>false</organismsDiffer>
    <experiments>3</experiments>
</comment>
<comment type="interaction">
    <interactant intactId="EBI-302345">
        <id>Q8ND90</id>
    </interactant>
    <interactant intactId="EBI-286199">
        <id>P41743</id>
        <label>PRKCI</label>
    </interactant>
    <organismsDiffer>false</organismsDiffer>
    <experiments>2</experiments>
</comment>
<comment type="interaction">
    <interactant intactId="EBI-302345">
        <id>Q8ND90</id>
    </interactant>
    <interactant intactId="EBI-2798416">
        <id>Q99633</id>
        <label>PRPF18</label>
    </interactant>
    <organismsDiffer>false</organismsDiffer>
    <experiments>3</experiments>
</comment>
<comment type="interaction">
    <interactant intactId="EBI-302345">
        <id>Q8ND90</id>
    </interactant>
    <interactant intactId="EBI-1567797">
        <id>Q8WWY3</id>
        <label>PRPF31</label>
    </interactant>
    <organismsDiffer>false</organismsDiffer>
    <experiments>11</experiments>
</comment>
<comment type="interaction">
    <interactant intactId="EBI-302345">
        <id>Q8ND90</id>
    </interactant>
    <interactant intactId="EBI-359352">
        <id>P25786</id>
        <label>PSMA1</label>
    </interactant>
    <organismsDiffer>false</organismsDiffer>
    <experiments>6</experiments>
</comment>
<comment type="interaction">
    <interactant intactId="EBI-302345">
        <id>Q8ND90</id>
    </interactant>
    <interactant intactId="EBI-1055693">
        <id>O75771</id>
        <label>RAD51D</label>
    </interactant>
    <organismsDiffer>false</organismsDiffer>
    <experiments>3</experiments>
</comment>
<comment type="interaction">
    <interactant intactId="EBI-302345">
        <id>Q8ND90</id>
    </interactant>
    <interactant intactId="EBI-740773">
        <id>Q96IZ5</id>
        <label>RBM41</label>
    </interactant>
    <organismsDiffer>false</organismsDiffer>
    <experiments>3</experiments>
</comment>
<comment type="interaction">
    <interactant intactId="EBI-302345">
        <id>Q8ND90</id>
    </interactant>
    <interactant intactId="EBI-366570">
        <id>Q9BUL9</id>
        <label>RPP25</label>
    </interactant>
    <organismsDiffer>false</organismsDiffer>
    <experiments>3</experiments>
</comment>
<comment type="interaction">
    <interactant intactId="EBI-302345">
        <id>Q8ND90</id>
    </interactant>
    <interactant intactId="EBI-10189722">
        <id>Q8N5L8</id>
        <label>RPP25L</label>
    </interactant>
    <organismsDiffer>false</organismsDiffer>
    <experiments>3</experiments>
</comment>
<comment type="interaction">
    <interactant intactId="EBI-302345">
        <id>Q8ND90</id>
    </interactant>
    <interactant intactId="EBI-10305303">
        <id>Q9H1X1</id>
        <label>RSPH9</label>
    </interactant>
    <organismsDiffer>false</organismsDiffer>
    <experiments>3</experiments>
</comment>
<comment type="interaction">
    <interactant intactId="EBI-302345">
        <id>Q8ND90</id>
    </interactant>
    <interactant intactId="EBI-10256202">
        <id>Q7L4I2-2</id>
        <label>RSRC2</label>
    </interactant>
    <organismsDiffer>false</organismsDiffer>
    <experiments>3</experiments>
</comment>
<comment type="interaction">
    <interactant intactId="EBI-302345">
        <id>Q8ND90</id>
    </interactant>
    <interactant intactId="EBI-10217913">
        <id>Q14D33</id>
        <label>RTP5</label>
    </interactant>
    <organismsDiffer>false</organismsDiffer>
    <experiments>6</experiments>
</comment>
<comment type="interaction">
    <interactant intactId="EBI-302345">
        <id>Q8ND90</id>
    </interactant>
    <interactant intactId="EBI-6257312">
        <id>Q9BVN2</id>
        <label>RUSC1</label>
    </interactant>
    <organismsDiffer>false</organismsDiffer>
    <experiments>8</experiments>
</comment>
<comment type="interaction">
    <interactant intactId="EBI-302345">
        <id>Q8ND90</id>
    </interactant>
    <interactant intactId="EBI-745846">
        <id>P57086</id>
        <label>SCAND1</label>
    </interactant>
    <organismsDiffer>false</organismsDiffer>
    <experiments>3</experiments>
</comment>
<comment type="interaction">
    <interactant intactId="EBI-302345">
        <id>Q8ND90</id>
    </interactant>
    <interactant intactId="EBI-748391">
        <id>Q9BWG6</id>
        <label>SCNM1</label>
    </interactant>
    <organismsDiffer>false</organismsDiffer>
    <experiments>8</experiments>
</comment>
<comment type="interaction">
    <interactant intactId="EBI-302345">
        <id>Q8ND90</id>
    </interactant>
    <interactant intactId="EBI-727004">
        <id>O00560</id>
        <label>SDCBP</label>
    </interactant>
    <organismsDiffer>false</organismsDiffer>
    <experiments>8</experiments>
</comment>
<comment type="interaction">
    <interactant intactId="EBI-302345">
        <id>Q8ND90</id>
    </interactant>
    <interactant intactId="EBI-10303490">
        <id>Q9C0C4</id>
        <label>SEMA4C</label>
    </interactant>
    <organismsDiffer>false</organismsDiffer>
    <experiments>6</experiments>
</comment>
<comment type="interaction">
    <interactant intactId="EBI-302345">
        <id>Q8ND90</id>
    </interactant>
    <interactant intactId="EBI-747035">
        <id>Q9H788</id>
        <label>SH2D4A</label>
    </interactant>
    <organismsDiffer>false</organismsDiffer>
    <experiments>6</experiments>
</comment>
<comment type="interaction">
    <interactant intactId="EBI-302345">
        <id>Q8ND90</id>
    </interactant>
    <interactant intactId="EBI-79084">
        <id>Q92529</id>
        <label>SHC3</label>
    </interactant>
    <organismsDiffer>false</organismsDiffer>
    <experiments>3</experiments>
</comment>
<comment type="interaction">
    <interactant intactId="EBI-302345">
        <id>Q8ND90</id>
    </interactant>
    <interactant intactId="EBI-10171518">
        <id>A0PJX4</id>
        <label>SHISA3</label>
    </interactant>
    <organismsDiffer>false</organismsDiffer>
    <experiments>3</experiments>
</comment>
<comment type="interaction">
    <interactant intactId="EBI-302345">
        <id>Q8ND90</id>
    </interactant>
    <interactant intactId="EBI-10255185">
        <id>Q6ZT89</id>
        <label>SLC25A48</label>
    </interactant>
    <organismsDiffer>false</organismsDiffer>
    <experiments>3</experiments>
</comment>
<comment type="interaction">
    <interactant intactId="EBI-302345">
        <id>Q8ND90</id>
    </interactant>
    <interactant intactId="EBI-1050793">
        <id>Q9GZT3</id>
        <label>SLIRP</label>
    </interactant>
    <organismsDiffer>false</organismsDiffer>
    <experiments>3</experiments>
</comment>
<comment type="interaction">
    <interactant intactId="EBI-302345">
        <id>Q8ND90</id>
    </interactant>
    <interactant intactId="EBI-741850">
        <id>Q9BZL3</id>
        <label>SMIM3</label>
    </interactant>
    <organismsDiffer>false</organismsDiffer>
    <experiments>3</experiments>
</comment>
<comment type="interaction">
    <interactant intactId="EBI-302345">
        <id>Q8ND90</id>
    </interactant>
    <interactant intactId="EBI-372475">
        <id>P14678-2</id>
        <label>SNRPB</label>
    </interactant>
    <organismsDiffer>false</organismsDiffer>
    <experiments>6</experiments>
</comment>
<comment type="interaction">
    <interactant intactId="EBI-302345">
        <id>Q8ND90</id>
    </interactant>
    <interactant intactId="EBI-1053651">
        <id>P08579</id>
        <label>SNRPB2</label>
    </interactant>
    <organismsDiffer>false</organismsDiffer>
    <experiments>5</experiments>
</comment>
<comment type="interaction">
    <interactant intactId="EBI-302345">
        <id>Q8ND90</id>
    </interactant>
    <interactant intactId="EBI-372911">
        <id>Q9H0A9</id>
        <label>SPATC1L</label>
    </interactant>
    <organismsDiffer>false</organismsDiffer>
    <experiments>3</experiments>
</comment>
<comment type="interaction">
    <interactant intactId="EBI-302345">
        <id>Q8ND90</id>
    </interactant>
    <interactant intactId="EBI-11995806">
        <id>Q9H0A9-2</id>
        <label>SPATC1L</label>
    </interactant>
    <organismsDiffer>false</organismsDiffer>
    <experiments>3</experiments>
</comment>
<comment type="interaction">
    <interactant intactId="EBI-302345">
        <id>Q8ND90</id>
    </interactant>
    <interactant intactId="EBI-717201">
        <id>Q9UQ90</id>
        <label>SPG7</label>
    </interactant>
    <organismsDiffer>false</organismsDiffer>
    <experiments>7</experiments>
</comment>
<comment type="interaction">
    <interactant intactId="EBI-302345">
        <id>Q8ND90</id>
    </interactant>
    <interactant intactId="EBI-745021">
        <id>Q96FJ0</id>
        <label>STAMBPL1</label>
    </interactant>
    <organismsDiffer>false</organismsDiffer>
    <experiments>3</experiments>
</comment>
<comment type="interaction">
    <interactant intactId="EBI-302345">
        <id>Q8ND90</id>
    </interactant>
    <interactant intactId="EBI-723127">
        <id>Q9H5I1</id>
        <label>SUV39H2</label>
    </interactant>
    <organismsDiffer>false</organismsDiffer>
    <experiments>5</experiments>
</comment>
<comment type="interaction">
    <interactant intactId="EBI-302345">
        <id>Q8ND90</id>
    </interactant>
    <interactant intactId="EBI-745958">
        <id>Q5VWN6</id>
        <label>TASOR2</label>
    </interactant>
    <organismsDiffer>false</organismsDiffer>
    <experiments>3</experiments>
</comment>
<comment type="interaction">
    <interactant intactId="EBI-302345">
        <id>Q8ND90</id>
    </interactant>
    <interactant intactId="EBI-710310">
        <id>Q15560</id>
        <label>TCEA2</label>
    </interactant>
    <organismsDiffer>false</organismsDiffer>
    <experiments>3</experiments>
</comment>
<comment type="interaction">
    <interactant intactId="EBI-302345">
        <id>Q8ND90</id>
    </interactant>
    <interactant intactId="EBI-954696">
        <id>Q8N8B7</id>
        <label>TCEANC</label>
    </interactant>
    <organismsDiffer>false</organismsDiffer>
    <experiments>3</experiments>
</comment>
<comment type="interaction">
    <interactant intactId="EBI-302345">
        <id>Q8ND90</id>
    </interactant>
    <interactant intactId="EBI-11955057">
        <id>Q8N8B7-2</id>
        <label>TCEANC</label>
    </interactant>
    <organismsDiffer>false</organismsDiffer>
    <experiments>3</experiments>
</comment>
<comment type="interaction">
    <interactant intactId="EBI-302345">
        <id>Q8ND90</id>
    </interactant>
    <interactant intactId="EBI-727338">
        <id>O95988</id>
        <label>TCL1B</label>
    </interactant>
    <organismsDiffer>false</organismsDiffer>
    <experiments>3</experiments>
</comment>
<comment type="interaction">
    <interactant intactId="EBI-302345">
        <id>Q8ND90</id>
    </interactant>
    <interactant intactId="EBI-16429215">
        <id>A0A0S2Z4F2</id>
        <label>TEAD4</label>
    </interactant>
    <organismsDiffer>false</organismsDiffer>
    <experiments>3</experiments>
</comment>
<comment type="interaction">
    <interactant intactId="EBI-302345">
        <id>Q8ND90</id>
    </interactant>
    <interactant intactId="EBI-10176734">
        <id>D3DUQ6</id>
        <label>TEAD4</label>
    </interactant>
    <organismsDiffer>false</organismsDiffer>
    <experiments>3</experiments>
</comment>
<comment type="interaction">
    <interactant intactId="EBI-302345">
        <id>Q8ND90</id>
    </interactant>
    <interactant intactId="EBI-747736">
        <id>Q15561</id>
        <label>TEAD4</label>
    </interactant>
    <organismsDiffer>false</organismsDiffer>
    <experiments>3</experiments>
</comment>
<comment type="interaction">
    <interactant intactId="EBI-302345">
        <id>Q8ND90</id>
    </interactant>
    <interactant intactId="EBI-10226570">
        <id>Q0P5Q0</id>
        <label>TMSB4X</label>
    </interactant>
    <organismsDiffer>false</organismsDiffer>
    <experiments>3</experiments>
</comment>
<comment type="interaction">
    <interactant intactId="EBI-302345">
        <id>Q8ND90</id>
    </interactant>
    <interactant intactId="EBI-746692">
        <id>P19237</id>
        <label>TNNI1</label>
    </interactant>
    <organismsDiffer>false</organismsDiffer>
    <experiments>6</experiments>
</comment>
<comment type="interaction">
    <interactant intactId="EBI-302345">
        <id>Q8ND90</id>
    </interactant>
    <interactant intactId="EBI-5235829">
        <id>Q8IWZ5</id>
        <label>TRIM42</label>
    </interactant>
    <organismsDiffer>false</organismsDiffer>
    <experiments>3</experiments>
</comment>
<comment type="interaction">
    <interactant intactId="EBI-302345">
        <id>Q8ND90</id>
    </interactant>
    <interactant intactId="EBI-10259086">
        <id>Q86UV6-2</id>
        <label>TRIM74</label>
    </interactant>
    <organismsDiffer>false</organismsDiffer>
    <experiments>3</experiments>
</comment>
<comment type="interaction">
    <interactant intactId="EBI-302345">
        <id>Q8ND90</id>
    </interactant>
    <interactant intactId="EBI-10687282">
        <id>Q9NRE2</id>
        <label>TSHZ2</label>
    </interactant>
    <organismsDiffer>false</organismsDiffer>
    <experiments>3</experiments>
</comment>
<comment type="interaction">
    <interactant intactId="EBI-302345">
        <id>Q8ND90</id>
    </interactant>
    <interactant intactId="EBI-308511">
        <id>Q9UJ04</id>
        <label>TSPYL4</label>
    </interactant>
    <organismsDiffer>false</organismsDiffer>
    <experiments>3</experiments>
</comment>
<comment type="interaction">
    <interactant intactId="EBI-302345">
        <id>Q8ND90</id>
    </interactant>
    <interactant intactId="EBI-9090990">
        <id>Q5W5X9-3</id>
        <label>TTC23</label>
    </interactant>
    <organismsDiffer>false</organismsDiffer>
    <experiments>3</experiments>
</comment>
<comment type="interaction">
    <interactant intactId="EBI-302345">
        <id>Q8ND90</id>
    </interactant>
    <interactant intactId="EBI-2851213">
        <id>Q8N5M4</id>
        <label>TTC9C</label>
    </interactant>
    <organismsDiffer>false</organismsDiffer>
    <experiments>3</experiments>
</comment>
<comment type="interaction">
    <interactant intactId="EBI-302345">
        <id>Q8ND90</id>
    </interactant>
    <interactant intactId="EBI-707554">
        <id>O14530</id>
        <label>TXNDC9</label>
    </interactant>
    <organismsDiffer>false</organismsDiffer>
    <experiments>3</experiments>
</comment>
<comment type="interaction">
    <interactant intactId="EBI-302345">
        <id>Q8ND90</id>
    </interactant>
    <interactant intactId="EBI-741480">
        <id>Q9UMX0</id>
        <label>UBQLN1</label>
    </interactant>
    <organismsDiffer>false</organismsDiffer>
    <experiments>4</experiments>
</comment>
<comment type="interaction">
    <interactant intactId="EBI-302345">
        <id>Q8ND90</id>
    </interactant>
    <interactant intactId="EBI-10173939">
        <id>Q9UMX0-2</id>
        <label>UBQLN1</label>
    </interactant>
    <organismsDiffer>false</organismsDiffer>
    <experiments>3</experiments>
</comment>
<comment type="interaction">
    <interactant intactId="EBI-302345">
        <id>Q8ND90</id>
    </interactant>
    <interactant intactId="EBI-10288943">
        <id>Q96HZ7</id>
        <label>URB1-AS1</label>
    </interactant>
    <organismsDiffer>false</organismsDiffer>
    <experiments>3</experiments>
</comment>
<comment type="interaction">
    <interactant intactId="EBI-302345">
        <id>Q8ND90</id>
    </interactant>
    <interactant intactId="EBI-743272">
        <id>O75604</id>
        <label>USP2</label>
    </interactant>
    <organismsDiffer>false</organismsDiffer>
    <experiments>3</experiments>
</comment>
<comment type="interaction">
    <interactant intactId="EBI-302345">
        <id>Q8ND90</id>
    </interactant>
    <interactant intactId="EBI-357430">
        <id>P61758</id>
        <label>VBP1</label>
    </interactant>
    <organismsDiffer>false</organismsDiffer>
    <experiments>3</experiments>
</comment>
<comment type="interaction">
    <interactant intactId="EBI-302345">
        <id>Q8ND90</id>
    </interactant>
    <interactant intactId="EBI-9031083">
        <id>Q9Y2B5</id>
        <label>VPS9D1</label>
    </interactant>
    <organismsDiffer>false</organismsDiffer>
    <experiments>3</experiments>
</comment>
<comment type="interaction">
    <interactant intactId="EBI-302345">
        <id>Q8ND90</id>
    </interactant>
    <interactant intactId="EBI-744560">
        <id>Q64LD2</id>
        <label>WDR25</label>
    </interactant>
    <organismsDiffer>false</organismsDiffer>
    <experiments>3</experiments>
</comment>
<comment type="interaction">
    <interactant intactId="EBI-302345">
        <id>Q8ND90</id>
    </interactant>
    <interactant intactId="EBI-10223946">
        <id>Q06250</id>
        <label>WT1-AS</label>
    </interactant>
    <organismsDiffer>false</organismsDiffer>
    <experiments>3</experiments>
</comment>
<comment type="interaction">
    <interactant intactId="EBI-302345">
        <id>Q8ND90</id>
    </interactant>
    <interactant intactId="EBI-740767">
        <id>Q53FD0</id>
        <label>ZC2HC1C</label>
    </interactant>
    <organismsDiffer>false</organismsDiffer>
    <experiments>4</experiments>
</comment>
<comment type="interaction">
    <interactant intactId="EBI-302345">
        <id>Q8ND90</id>
    </interactant>
    <interactant intactId="EBI-748373">
        <id>Q6PEW1</id>
        <label>ZCCHC12</label>
    </interactant>
    <organismsDiffer>false</organismsDiffer>
    <experiments>12</experiments>
</comment>
<comment type="interaction">
    <interactant intactId="EBI-302345">
        <id>Q8ND90</id>
    </interactant>
    <interactant intactId="EBI-750052">
        <id>Q9Y260</id>
        <label>ZFAB</label>
    </interactant>
    <organismsDiffer>false</organismsDiffer>
    <experiments>3</experiments>
</comment>
<comment type="interaction">
    <interactant intactId="EBI-302345">
        <id>Q8ND90</id>
    </interactant>
    <interactant intactId="EBI-8656416">
        <id>Q68DK2-5</id>
        <label>ZFYVE26</label>
    </interactant>
    <organismsDiffer>false</organismsDiffer>
    <experiments>3</experiments>
</comment>
<comment type="interaction">
    <interactant intactId="EBI-302345">
        <id>Q8ND90</id>
    </interactant>
    <interactant intactId="EBI-953824">
        <id>Q96DA0</id>
        <label>ZG16B</label>
    </interactant>
    <organismsDiffer>false</organismsDiffer>
    <experiments>3</experiments>
</comment>
<comment type="interaction">
    <interactant intactId="EBI-302345">
        <id>Q8ND90</id>
    </interactant>
    <interactant intactId="EBI-11742222">
        <id>Q9UQR1-2</id>
        <label>ZNF148</label>
    </interactant>
    <organismsDiffer>false</organismsDiffer>
    <experiments>3</experiments>
</comment>
<comment type="interaction">
    <interactant intactId="EBI-302345">
        <id>Q8ND90</id>
    </interactant>
    <interactant intactId="EBI-11041653">
        <id>P13682</id>
        <label>ZNF35</label>
    </interactant>
    <organismsDiffer>false</organismsDiffer>
    <experiments>3</experiments>
</comment>
<comment type="interaction">
    <interactant intactId="EBI-302345">
        <id>Q8ND90</id>
    </interactant>
    <interactant intactId="EBI-11962468">
        <id>Q7Z4V0</id>
        <label>ZNF438</label>
    </interactant>
    <organismsDiffer>false</organismsDiffer>
    <experiments>3</experiments>
</comment>
<comment type="interaction">
    <interactant intactId="EBI-302345">
        <id>Q8ND90</id>
    </interactant>
    <interactant intactId="EBI-10273713">
        <id>Q8TBZ8</id>
        <label>ZNF564</label>
    </interactant>
    <organismsDiffer>false</organismsDiffer>
    <experiments>3</experiments>
</comment>
<comment type="interaction">
    <interactant intactId="EBI-302345">
        <id>Q8ND90</id>
    </interactant>
    <interactant intactId="EBI-745520">
        <id>Q9P0T4</id>
        <label>ZNF581</label>
    </interactant>
    <organismsDiffer>false</organismsDiffer>
    <experiments>8</experiments>
</comment>
<comment type="interaction">
    <interactant intactId="EBI-302345">
        <id>Q8ND90</id>
    </interactant>
    <interactant intactId="EBI-16429014">
        <id>A0A0S2Z5X4</id>
        <label>ZNF688</label>
    </interactant>
    <organismsDiffer>false</organismsDiffer>
    <experiments>3</experiments>
</comment>
<comment type="interaction">
    <interactant intactId="EBI-302345">
        <id>Q8ND90</id>
    </interactant>
    <interactant intactId="EBI-10255097">
        <id>Q6ZN96</id>
    </interactant>
    <organismsDiffer>false</organismsDiffer>
    <experiments>6</experiments>
</comment>
<comment type="interaction">
    <interactant intactId="EBI-302345">
        <id>Q8ND90</id>
    </interactant>
    <interactant intactId="EBI-25492395">
        <id>PRO_0000449633</id>
        <label>rep</label>
        <dbReference type="UniProtKB" id="P0DTD1"/>
    </interactant>
    <organismsDiffer>true</organismsDiffer>
    <experiments>3</experiments>
</comment>
<comment type="subcellular location">
    <subcellularLocation>
        <location evidence="1">Nucleus</location>
        <location evidence="1">Nucleolus</location>
    </subcellularLocation>
    <text>In tumor cells, it is cytoplasmic.</text>
</comment>
<comment type="tissue specificity">
    <text evidence="1 2">Testis- and brain-specific. In some cancer patients, specifically expressed by paraneoplastic tumor cells.</text>
</comment>
<comment type="miscellaneous">
    <text>Antibodies against PNMA1 are present in sera from patients suffering of paraneoplastic neurological disorders.</text>
</comment>
<comment type="similarity">
    <text evidence="3">Belongs to the PNMA family.</text>
</comment>
<gene>
    <name type="primary">PNMA1</name>
    <name type="synonym">MA1</name>
</gene>
<name>PNMA1_HUMAN</name>
<accession>Q8ND90</accession>
<accession>A8K4L5</accession>
<accession>O95144</accession>
<accession>Q8NG07</accession>
<evidence type="ECO:0000269" key="1">
    <source>
    </source>
</evidence>
<evidence type="ECO:0000269" key="2">
    <source>
    </source>
</evidence>
<evidence type="ECO:0000305" key="3"/>
<feature type="chain" id="PRO_0000155199" description="Paraneoplastic antigen Ma1">
    <location>
        <begin position="1"/>
        <end position="353"/>
    </location>
</feature>
<feature type="sequence variant" id="VAR_053595" description="In dbSNP:rs35129712.">
    <original>M</original>
    <variation>V</variation>
    <location>
        <position position="54"/>
    </location>
</feature>
<feature type="sequence variant" id="VAR_053596" description="In dbSNP:rs34413931.">
    <original>R</original>
    <variation>P</variation>
    <location>
        <position position="215"/>
    </location>
</feature>
<organism>
    <name type="scientific">Homo sapiens</name>
    <name type="common">Human</name>
    <dbReference type="NCBI Taxonomy" id="9606"/>
    <lineage>
        <taxon>Eukaryota</taxon>
        <taxon>Metazoa</taxon>
        <taxon>Chordata</taxon>
        <taxon>Craniata</taxon>
        <taxon>Vertebrata</taxon>
        <taxon>Euteleostomi</taxon>
        <taxon>Mammalia</taxon>
        <taxon>Eutheria</taxon>
        <taxon>Euarchontoglires</taxon>
        <taxon>Primates</taxon>
        <taxon>Haplorrhini</taxon>
        <taxon>Catarrhini</taxon>
        <taxon>Hominidae</taxon>
        <taxon>Homo</taxon>
    </lineage>
</organism>
<proteinExistence type="evidence at protein level"/>
<sequence>MAMTLLEDWCRGMDVNSQRALLVWGIPVNCDEAEIEETLQAAMPQVSYRMLGRMFWREENAKAALLELTGAVDYAAIPREMPGKGGVWKVLFKPPTSDAEFLERLHLFLAREGWTVQDVARVLGFQNPTPTPGPEMPAEMLNYILDNVIQPLVESIWYKRLTLFSGRDIPGPGEETFDPWLEHTNEVLEEWQVSDVEKRRRLMESLRGPAADVIRILKSNNPAITTAECLKALEQVFGSVESSRDAQIKFLNTYQNPGEKLSAYVIRLEPLLQKVVEKGAIDKDNVNQARLEQVIAGANHSGAIRRQLWLTGAGEGPAPNLFQLLVQIREEEAKEEEEEAEATLLQLGLEGHF</sequence>
<reference key="1">
    <citation type="journal article" date="1999" name="Brain">
        <title>Ma1, a novel neuron- and testis-specific protein, is recognized by the serum of patients with paraneoplastic neurological disorders.</title>
        <authorList>
            <person name="Dalmau J."/>
            <person name="Gultekin S.H."/>
            <person name="Voltz R."/>
            <person name="Hoard R."/>
            <person name="DesChamps T."/>
            <person name="Balmaceda C."/>
            <person name="Batchelor T."/>
            <person name="Gerstner E."/>
            <person name="Eichen J."/>
            <person name="Frennier J."/>
            <person name="Posner J.B."/>
            <person name="Rosenfeld M.R."/>
        </authorList>
    </citation>
    <scope>NUCLEOTIDE SEQUENCE [MRNA]</scope>
    <scope>SUBCELLULAR LOCATION</scope>
    <scope>TISSUE SPECIFICITY</scope>
    <source>
        <tissue>Cerebellum</tissue>
    </source>
</reference>
<reference key="2">
    <citation type="journal article" date="2005" name="J. Neuroimmunol.">
        <title>The human PNMA family: novel neuronal proteins implicated in paraneoplastic neurological disease.</title>
        <authorList>
            <person name="Schueller M."/>
            <person name="Jenne D.E."/>
            <person name="Voltz R."/>
        </authorList>
    </citation>
    <scope>NUCLEOTIDE SEQUENCE [MRNA]</scope>
</reference>
<reference key="3">
    <citation type="journal article" date="2004" name="Nat. Genet.">
        <title>Complete sequencing and characterization of 21,243 full-length human cDNAs.</title>
        <authorList>
            <person name="Ota T."/>
            <person name="Suzuki Y."/>
            <person name="Nishikawa T."/>
            <person name="Otsuki T."/>
            <person name="Sugiyama T."/>
            <person name="Irie R."/>
            <person name="Wakamatsu A."/>
            <person name="Hayashi K."/>
            <person name="Sato H."/>
            <person name="Nagai K."/>
            <person name="Kimura K."/>
            <person name="Makita H."/>
            <person name="Sekine M."/>
            <person name="Obayashi M."/>
            <person name="Nishi T."/>
            <person name="Shibahara T."/>
            <person name="Tanaka T."/>
            <person name="Ishii S."/>
            <person name="Yamamoto J."/>
            <person name="Saito K."/>
            <person name="Kawai Y."/>
            <person name="Isono Y."/>
            <person name="Nakamura Y."/>
            <person name="Nagahari K."/>
            <person name="Murakami K."/>
            <person name="Yasuda T."/>
            <person name="Iwayanagi T."/>
            <person name="Wagatsuma M."/>
            <person name="Shiratori A."/>
            <person name="Sudo H."/>
            <person name="Hosoiri T."/>
            <person name="Kaku Y."/>
            <person name="Kodaira H."/>
            <person name="Kondo H."/>
            <person name="Sugawara M."/>
            <person name="Takahashi M."/>
            <person name="Kanda K."/>
            <person name="Yokoi T."/>
            <person name="Furuya T."/>
            <person name="Kikkawa E."/>
            <person name="Omura Y."/>
            <person name="Abe K."/>
            <person name="Kamihara K."/>
            <person name="Katsuta N."/>
            <person name="Sato K."/>
            <person name="Tanikawa M."/>
            <person name="Yamazaki M."/>
            <person name="Ninomiya K."/>
            <person name="Ishibashi T."/>
            <person name="Yamashita H."/>
            <person name="Murakawa K."/>
            <person name="Fujimori K."/>
            <person name="Tanai H."/>
            <person name="Kimata M."/>
            <person name="Watanabe M."/>
            <person name="Hiraoka S."/>
            <person name="Chiba Y."/>
            <person name="Ishida S."/>
            <person name="Ono Y."/>
            <person name="Takiguchi S."/>
            <person name="Watanabe S."/>
            <person name="Yosida M."/>
            <person name="Hotuta T."/>
            <person name="Kusano J."/>
            <person name="Kanehori K."/>
            <person name="Takahashi-Fujii A."/>
            <person name="Hara H."/>
            <person name="Tanase T.-O."/>
            <person name="Nomura Y."/>
            <person name="Togiya S."/>
            <person name="Komai F."/>
            <person name="Hara R."/>
            <person name="Takeuchi K."/>
            <person name="Arita M."/>
            <person name="Imose N."/>
            <person name="Musashino K."/>
            <person name="Yuuki H."/>
            <person name="Oshima A."/>
            <person name="Sasaki N."/>
            <person name="Aotsuka S."/>
            <person name="Yoshikawa Y."/>
            <person name="Matsunawa H."/>
            <person name="Ichihara T."/>
            <person name="Shiohata N."/>
            <person name="Sano S."/>
            <person name="Moriya S."/>
            <person name="Momiyama H."/>
            <person name="Satoh N."/>
            <person name="Takami S."/>
            <person name="Terashima Y."/>
            <person name="Suzuki O."/>
            <person name="Nakagawa S."/>
            <person name="Senoh A."/>
            <person name="Mizoguchi H."/>
            <person name="Goto Y."/>
            <person name="Shimizu F."/>
            <person name="Wakebe H."/>
            <person name="Hishigaki H."/>
            <person name="Watanabe T."/>
            <person name="Sugiyama A."/>
            <person name="Takemoto M."/>
            <person name="Kawakami B."/>
            <person name="Yamazaki M."/>
            <person name="Watanabe K."/>
            <person name="Kumagai A."/>
            <person name="Itakura S."/>
            <person name="Fukuzumi Y."/>
            <person name="Fujimori Y."/>
            <person name="Komiyama M."/>
            <person name="Tashiro H."/>
            <person name="Tanigami A."/>
            <person name="Fujiwara T."/>
            <person name="Ono T."/>
            <person name="Yamada K."/>
            <person name="Fujii Y."/>
            <person name="Ozaki K."/>
            <person name="Hirao M."/>
            <person name="Ohmori Y."/>
            <person name="Kawabata A."/>
            <person name="Hikiji T."/>
            <person name="Kobatake N."/>
            <person name="Inagaki H."/>
            <person name="Ikema Y."/>
            <person name="Okamoto S."/>
            <person name="Okitani R."/>
            <person name="Kawakami T."/>
            <person name="Noguchi S."/>
            <person name="Itoh T."/>
            <person name="Shigeta K."/>
            <person name="Senba T."/>
            <person name="Matsumura K."/>
            <person name="Nakajima Y."/>
            <person name="Mizuno T."/>
            <person name="Morinaga M."/>
            <person name="Sasaki M."/>
            <person name="Togashi T."/>
            <person name="Oyama M."/>
            <person name="Hata H."/>
            <person name="Watanabe M."/>
            <person name="Komatsu T."/>
            <person name="Mizushima-Sugano J."/>
            <person name="Satoh T."/>
            <person name="Shirai Y."/>
            <person name="Takahashi Y."/>
            <person name="Nakagawa K."/>
            <person name="Okumura K."/>
            <person name="Nagase T."/>
            <person name="Nomura N."/>
            <person name="Kikuchi H."/>
            <person name="Masuho Y."/>
            <person name="Yamashita R."/>
            <person name="Nakai K."/>
            <person name="Yada T."/>
            <person name="Nakamura Y."/>
            <person name="Ohara O."/>
            <person name="Isogai T."/>
            <person name="Sugano S."/>
        </authorList>
    </citation>
    <scope>NUCLEOTIDE SEQUENCE [LARGE SCALE MRNA]</scope>
</reference>
<reference key="4">
    <citation type="submission" date="2005-07" db="EMBL/GenBank/DDBJ databases">
        <authorList>
            <person name="Mural R.J."/>
            <person name="Istrail S."/>
            <person name="Sutton G.G."/>
            <person name="Florea L."/>
            <person name="Halpern A.L."/>
            <person name="Mobarry C.M."/>
            <person name="Lippert R."/>
            <person name="Walenz B."/>
            <person name="Shatkay H."/>
            <person name="Dew I."/>
            <person name="Miller J.R."/>
            <person name="Flanigan M.J."/>
            <person name="Edwards N.J."/>
            <person name="Bolanos R."/>
            <person name="Fasulo D."/>
            <person name="Halldorsson B.V."/>
            <person name="Hannenhalli S."/>
            <person name="Turner R."/>
            <person name="Yooseph S."/>
            <person name="Lu F."/>
            <person name="Nusskern D.R."/>
            <person name="Shue B.C."/>
            <person name="Zheng X.H."/>
            <person name="Zhong F."/>
            <person name="Delcher A.L."/>
            <person name="Huson D.H."/>
            <person name="Kravitz S.A."/>
            <person name="Mouchard L."/>
            <person name="Reinert K."/>
            <person name="Remington K.A."/>
            <person name="Clark A.G."/>
            <person name="Waterman M.S."/>
            <person name="Eichler E.E."/>
            <person name="Adams M.D."/>
            <person name="Hunkapiller M.W."/>
            <person name="Myers E.W."/>
            <person name="Venter J.C."/>
        </authorList>
    </citation>
    <scope>NUCLEOTIDE SEQUENCE [LARGE SCALE GENOMIC DNA]</scope>
</reference>
<reference key="5">
    <citation type="journal article" date="2004" name="Genome Res.">
        <title>The status, quality, and expansion of the NIH full-length cDNA project: the Mammalian Gene Collection (MGC).</title>
        <authorList>
            <consortium name="The MGC Project Team"/>
        </authorList>
    </citation>
    <scope>NUCLEOTIDE SEQUENCE [LARGE SCALE MRNA]</scope>
    <source>
        <tissue>Prostate</tissue>
    </source>
</reference>
<reference key="6">
    <citation type="journal article" date="2007" name="BMC Genomics">
        <title>The full-ORF clone resource of the German cDNA consortium.</title>
        <authorList>
            <person name="Bechtel S."/>
            <person name="Rosenfelder H."/>
            <person name="Duda A."/>
            <person name="Schmidt C.P."/>
            <person name="Ernst U."/>
            <person name="Wellenreuther R."/>
            <person name="Mehrle A."/>
            <person name="Schuster C."/>
            <person name="Bahr A."/>
            <person name="Bloecker H."/>
            <person name="Heubner D."/>
            <person name="Hoerlein A."/>
            <person name="Michel G."/>
            <person name="Wedler H."/>
            <person name="Koehrer K."/>
            <person name="Ottenwaelder B."/>
            <person name="Poustka A."/>
            <person name="Wiemann S."/>
            <person name="Schupp I."/>
        </authorList>
    </citation>
    <scope>NUCLEOTIDE SEQUENCE [LARGE SCALE MRNA] OF 162-353</scope>
    <source>
        <tissue>Testis</tissue>
    </source>
</reference>
<reference key="7">
    <citation type="journal article" date="2009" name="Cereb. Cortex">
        <title>Paraneoplastic antigen-like 5 gene (PNMA5) is preferentially expressed in the association areas in a primate specific manner.</title>
        <authorList>
            <person name="Takaji M."/>
            <person name="Komatsu Y."/>
            <person name="Watakabe A."/>
            <person name="Hashikawa T."/>
            <person name="Yamamori T."/>
        </authorList>
    </citation>
    <scope>TISSUE SPECIFICITY</scope>
</reference>